<dbReference type="EC" id="1.1.1.94" evidence="1"/>
<dbReference type="EMBL" id="BA000039">
    <property type="protein sequence ID" value="BAC09663.1"/>
    <property type="molecule type" value="Genomic_DNA"/>
</dbReference>
<dbReference type="RefSeq" id="NP_682901.1">
    <property type="nucleotide sequence ID" value="NC_004113.1"/>
</dbReference>
<dbReference type="RefSeq" id="WP_011057945.1">
    <property type="nucleotide sequence ID" value="NC_004113.1"/>
</dbReference>
<dbReference type="SMR" id="Q8DH49"/>
<dbReference type="STRING" id="197221.gene:10748722"/>
<dbReference type="EnsemblBacteria" id="BAC09663">
    <property type="protein sequence ID" value="BAC09663"/>
    <property type="gene ID" value="BAC09663"/>
</dbReference>
<dbReference type="KEGG" id="tel:tll2111"/>
<dbReference type="PATRIC" id="fig|197221.4.peg.2209"/>
<dbReference type="eggNOG" id="COG0240">
    <property type="taxonomic scope" value="Bacteria"/>
</dbReference>
<dbReference type="UniPathway" id="UPA00940"/>
<dbReference type="Proteomes" id="UP000000440">
    <property type="component" value="Chromosome"/>
</dbReference>
<dbReference type="GO" id="GO:0005829">
    <property type="term" value="C:cytosol"/>
    <property type="evidence" value="ECO:0007669"/>
    <property type="project" value="TreeGrafter"/>
</dbReference>
<dbReference type="GO" id="GO:0047952">
    <property type="term" value="F:glycerol-3-phosphate dehydrogenase [NAD(P)+] activity"/>
    <property type="evidence" value="ECO:0007669"/>
    <property type="project" value="UniProtKB-UniRule"/>
</dbReference>
<dbReference type="GO" id="GO:0051287">
    <property type="term" value="F:NAD binding"/>
    <property type="evidence" value="ECO:0007669"/>
    <property type="project" value="InterPro"/>
</dbReference>
<dbReference type="GO" id="GO:0005975">
    <property type="term" value="P:carbohydrate metabolic process"/>
    <property type="evidence" value="ECO:0007669"/>
    <property type="project" value="InterPro"/>
</dbReference>
<dbReference type="GO" id="GO:0046167">
    <property type="term" value="P:glycerol-3-phosphate biosynthetic process"/>
    <property type="evidence" value="ECO:0007669"/>
    <property type="project" value="UniProtKB-UniRule"/>
</dbReference>
<dbReference type="GO" id="GO:0046168">
    <property type="term" value="P:glycerol-3-phosphate catabolic process"/>
    <property type="evidence" value="ECO:0007669"/>
    <property type="project" value="InterPro"/>
</dbReference>
<dbReference type="GO" id="GO:0006650">
    <property type="term" value="P:glycerophospholipid metabolic process"/>
    <property type="evidence" value="ECO:0007669"/>
    <property type="project" value="UniProtKB-UniRule"/>
</dbReference>
<dbReference type="GO" id="GO:0008654">
    <property type="term" value="P:phospholipid biosynthetic process"/>
    <property type="evidence" value="ECO:0007669"/>
    <property type="project" value="UniProtKB-KW"/>
</dbReference>
<dbReference type="FunFam" id="1.10.1040.10:FF:000001">
    <property type="entry name" value="Glycerol-3-phosphate dehydrogenase [NAD(P)+]"/>
    <property type="match status" value="1"/>
</dbReference>
<dbReference type="Gene3D" id="1.10.1040.10">
    <property type="entry name" value="N-(1-d-carboxylethyl)-l-norvaline Dehydrogenase, domain 2"/>
    <property type="match status" value="1"/>
</dbReference>
<dbReference type="Gene3D" id="3.40.50.720">
    <property type="entry name" value="NAD(P)-binding Rossmann-like Domain"/>
    <property type="match status" value="1"/>
</dbReference>
<dbReference type="HAMAP" id="MF_00394">
    <property type="entry name" value="NAD_Glyc3P_dehydrog"/>
    <property type="match status" value="1"/>
</dbReference>
<dbReference type="InterPro" id="IPR008927">
    <property type="entry name" value="6-PGluconate_DH-like_C_sf"/>
</dbReference>
<dbReference type="InterPro" id="IPR013328">
    <property type="entry name" value="6PGD_dom2"/>
</dbReference>
<dbReference type="InterPro" id="IPR006168">
    <property type="entry name" value="G3P_DH_NAD-dep"/>
</dbReference>
<dbReference type="InterPro" id="IPR006109">
    <property type="entry name" value="G3P_DH_NAD-dep_C"/>
</dbReference>
<dbReference type="InterPro" id="IPR011128">
    <property type="entry name" value="G3P_DH_NAD-dep_N"/>
</dbReference>
<dbReference type="InterPro" id="IPR036291">
    <property type="entry name" value="NAD(P)-bd_dom_sf"/>
</dbReference>
<dbReference type="NCBIfam" id="NF000940">
    <property type="entry name" value="PRK00094.1-2"/>
    <property type="match status" value="1"/>
</dbReference>
<dbReference type="NCBIfam" id="NF000942">
    <property type="entry name" value="PRK00094.1-4"/>
    <property type="match status" value="1"/>
</dbReference>
<dbReference type="NCBIfam" id="NF011212">
    <property type="entry name" value="PRK14619.1"/>
    <property type="match status" value="1"/>
</dbReference>
<dbReference type="PANTHER" id="PTHR11728">
    <property type="entry name" value="GLYCEROL-3-PHOSPHATE DEHYDROGENASE"/>
    <property type="match status" value="1"/>
</dbReference>
<dbReference type="PANTHER" id="PTHR11728:SF1">
    <property type="entry name" value="GLYCEROL-3-PHOSPHATE DEHYDROGENASE [NAD(+)] 2, CHLOROPLASTIC"/>
    <property type="match status" value="1"/>
</dbReference>
<dbReference type="Pfam" id="PF07479">
    <property type="entry name" value="NAD_Gly3P_dh_C"/>
    <property type="match status" value="1"/>
</dbReference>
<dbReference type="Pfam" id="PF01210">
    <property type="entry name" value="NAD_Gly3P_dh_N"/>
    <property type="match status" value="1"/>
</dbReference>
<dbReference type="PIRSF" id="PIRSF000114">
    <property type="entry name" value="Glycerol-3-P_dh"/>
    <property type="match status" value="1"/>
</dbReference>
<dbReference type="SUPFAM" id="SSF48179">
    <property type="entry name" value="6-phosphogluconate dehydrogenase C-terminal domain-like"/>
    <property type="match status" value="1"/>
</dbReference>
<dbReference type="SUPFAM" id="SSF51735">
    <property type="entry name" value="NAD(P)-binding Rossmann-fold domains"/>
    <property type="match status" value="1"/>
</dbReference>
<dbReference type="PROSITE" id="PS00957">
    <property type="entry name" value="NAD_G3PDH"/>
    <property type="match status" value="1"/>
</dbReference>
<accession>Q8DH49</accession>
<keyword id="KW-0963">Cytoplasm</keyword>
<keyword id="KW-0444">Lipid biosynthesis</keyword>
<keyword id="KW-0443">Lipid metabolism</keyword>
<keyword id="KW-0520">NAD</keyword>
<keyword id="KW-0521">NADP</keyword>
<keyword id="KW-0547">Nucleotide-binding</keyword>
<keyword id="KW-0560">Oxidoreductase</keyword>
<keyword id="KW-0594">Phospholipid biosynthesis</keyword>
<keyword id="KW-1208">Phospholipid metabolism</keyword>
<keyword id="KW-1185">Reference proteome</keyword>
<comment type="function">
    <text evidence="1">Catalyzes the reduction of the glycolytic intermediate dihydroxyacetone phosphate (DHAP) to sn-glycerol 3-phosphate (G3P), the key precursor for phospholipid synthesis.</text>
</comment>
<comment type="catalytic activity">
    <reaction evidence="1">
        <text>sn-glycerol 3-phosphate + NAD(+) = dihydroxyacetone phosphate + NADH + H(+)</text>
        <dbReference type="Rhea" id="RHEA:11092"/>
        <dbReference type="ChEBI" id="CHEBI:15378"/>
        <dbReference type="ChEBI" id="CHEBI:57540"/>
        <dbReference type="ChEBI" id="CHEBI:57597"/>
        <dbReference type="ChEBI" id="CHEBI:57642"/>
        <dbReference type="ChEBI" id="CHEBI:57945"/>
        <dbReference type="EC" id="1.1.1.94"/>
    </reaction>
    <physiologicalReaction direction="right-to-left" evidence="1">
        <dbReference type="Rhea" id="RHEA:11094"/>
    </physiologicalReaction>
</comment>
<comment type="catalytic activity">
    <reaction evidence="1">
        <text>sn-glycerol 3-phosphate + NADP(+) = dihydroxyacetone phosphate + NADPH + H(+)</text>
        <dbReference type="Rhea" id="RHEA:11096"/>
        <dbReference type="ChEBI" id="CHEBI:15378"/>
        <dbReference type="ChEBI" id="CHEBI:57597"/>
        <dbReference type="ChEBI" id="CHEBI:57642"/>
        <dbReference type="ChEBI" id="CHEBI:57783"/>
        <dbReference type="ChEBI" id="CHEBI:58349"/>
        <dbReference type="EC" id="1.1.1.94"/>
    </reaction>
    <physiologicalReaction direction="right-to-left" evidence="1">
        <dbReference type="Rhea" id="RHEA:11098"/>
    </physiologicalReaction>
</comment>
<comment type="pathway">
    <text evidence="1">Membrane lipid metabolism; glycerophospholipid metabolism.</text>
</comment>
<comment type="subcellular location">
    <subcellularLocation>
        <location evidence="1">Cytoplasm</location>
    </subcellularLocation>
</comment>
<comment type="similarity">
    <text evidence="1">Belongs to the NAD-dependent glycerol-3-phosphate dehydrogenase family.</text>
</comment>
<reference key="1">
    <citation type="journal article" date="2002" name="DNA Res.">
        <title>Complete genome structure of the thermophilic cyanobacterium Thermosynechococcus elongatus BP-1.</title>
        <authorList>
            <person name="Nakamura Y."/>
            <person name="Kaneko T."/>
            <person name="Sato S."/>
            <person name="Ikeuchi M."/>
            <person name="Katoh H."/>
            <person name="Sasamoto S."/>
            <person name="Watanabe A."/>
            <person name="Iriguchi M."/>
            <person name="Kawashima K."/>
            <person name="Kimura T."/>
            <person name="Kishida Y."/>
            <person name="Kiyokawa C."/>
            <person name="Kohara M."/>
            <person name="Matsumoto M."/>
            <person name="Matsuno A."/>
            <person name="Nakazaki N."/>
            <person name="Shimpo S."/>
            <person name="Sugimoto M."/>
            <person name="Takeuchi C."/>
            <person name="Yamada M."/>
            <person name="Tabata S."/>
        </authorList>
    </citation>
    <scope>NUCLEOTIDE SEQUENCE [LARGE SCALE GENOMIC DNA]</scope>
    <source>
        <strain>NIES-2133 / IAM M-273 / BP-1</strain>
    </source>
</reference>
<proteinExistence type="inferred from homology"/>
<name>GPDA_THEVB</name>
<protein>
    <recommendedName>
        <fullName evidence="1">Glycerol-3-phosphate dehydrogenase [NAD(P)+]</fullName>
        <ecNumber evidence="1">1.1.1.94</ecNumber>
    </recommendedName>
    <alternativeName>
        <fullName evidence="1">NAD(P)(+)-dependent glycerol-3-phosphate dehydrogenase</fullName>
    </alternativeName>
    <alternativeName>
        <fullName evidence="1">NAD(P)H-dependent dihydroxyacetone-phosphate reductase</fullName>
    </alternativeName>
</protein>
<sequence>MSPRVLILGLGHWGQTLAYLFEQRGCTVSSWGRSQGALSAALFQDIHLLVSALPIKAVREVAAQVTRLHPPLGIILVSATKGLESETFATAADIWQTYCPHHDLVVLSGPNLASEIQQGLPAAAVVGGNLAATKQVQDCLGSPTFRLYSNEDRRGVEMGGIFKNVIAIACGVNDGLGLGVNARSALITRGLVEMVRVGTHWGGQVETFYGLSGLGDLLATCTSALSRNYQVGWHLAQGKSLSQALALTKGTAEGVNTARVLCTYAQQHQLDIPITAMVNAVLCGSLTPQAALHCLLERPFKPEVIPGQ</sequence>
<organism>
    <name type="scientific">Thermosynechococcus vestitus (strain NIES-2133 / IAM M-273 / BP-1)</name>
    <dbReference type="NCBI Taxonomy" id="197221"/>
    <lineage>
        <taxon>Bacteria</taxon>
        <taxon>Bacillati</taxon>
        <taxon>Cyanobacteriota</taxon>
        <taxon>Cyanophyceae</taxon>
        <taxon>Acaryochloridales</taxon>
        <taxon>Thermosynechococcaceae</taxon>
        <taxon>Thermosynechococcus</taxon>
    </lineage>
</organism>
<gene>
    <name evidence="1" type="primary">gpsA</name>
    <name type="ordered locus">tll2111</name>
</gene>
<feature type="chain" id="PRO_0000138045" description="Glycerol-3-phosphate dehydrogenase [NAD(P)+]">
    <location>
        <begin position="1"/>
        <end position="308"/>
    </location>
</feature>
<feature type="active site" description="Proton acceptor" evidence="1">
    <location>
        <position position="163"/>
    </location>
</feature>
<feature type="binding site" evidence="1">
    <location>
        <position position="13"/>
    </location>
    <ligand>
        <name>NADPH</name>
        <dbReference type="ChEBI" id="CHEBI:57783"/>
    </ligand>
</feature>
<feature type="binding site" evidence="1">
    <location>
        <position position="33"/>
    </location>
    <ligand>
        <name>NADPH</name>
        <dbReference type="ChEBI" id="CHEBI:57783"/>
    </ligand>
</feature>
<feature type="binding site" evidence="1">
    <location>
        <position position="81"/>
    </location>
    <ligand>
        <name>NADPH</name>
        <dbReference type="ChEBI" id="CHEBI:57783"/>
    </ligand>
</feature>
<feature type="binding site" evidence="1">
    <location>
        <position position="81"/>
    </location>
    <ligand>
        <name>sn-glycerol 3-phosphate</name>
        <dbReference type="ChEBI" id="CHEBI:57597"/>
    </ligand>
</feature>
<feature type="binding site" evidence="1">
    <location>
        <position position="109"/>
    </location>
    <ligand>
        <name>sn-glycerol 3-phosphate</name>
        <dbReference type="ChEBI" id="CHEBI:57597"/>
    </ligand>
</feature>
<feature type="binding site" evidence="1">
    <location>
        <position position="113"/>
    </location>
    <ligand>
        <name>NADPH</name>
        <dbReference type="ChEBI" id="CHEBI:57783"/>
    </ligand>
</feature>
<feature type="binding site" evidence="1">
    <location>
        <position position="163"/>
    </location>
    <ligand>
        <name>sn-glycerol 3-phosphate</name>
        <dbReference type="ChEBI" id="CHEBI:57597"/>
    </ligand>
</feature>
<feature type="binding site" evidence="1">
    <location>
        <position position="216"/>
    </location>
    <ligand>
        <name>sn-glycerol 3-phosphate</name>
        <dbReference type="ChEBI" id="CHEBI:57597"/>
    </ligand>
</feature>
<feature type="binding site" evidence="1">
    <location>
        <position position="226"/>
    </location>
    <ligand>
        <name>sn-glycerol 3-phosphate</name>
        <dbReference type="ChEBI" id="CHEBI:57597"/>
    </ligand>
</feature>
<feature type="binding site" evidence="1">
    <location>
        <position position="227"/>
    </location>
    <ligand>
        <name>NADPH</name>
        <dbReference type="ChEBI" id="CHEBI:57783"/>
    </ligand>
</feature>
<feature type="binding site" evidence="1">
    <location>
        <position position="227"/>
    </location>
    <ligand>
        <name>sn-glycerol 3-phosphate</name>
        <dbReference type="ChEBI" id="CHEBI:57597"/>
    </ligand>
</feature>
<feature type="binding site" evidence="1">
    <location>
        <position position="228"/>
    </location>
    <ligand>
        <name>sn-glycerol 3-phosphate</name>
        <dbReference type="ChEBI" id="CHEBI:57597"/>
    </ligand>
</feature>
<feature type="binding site" evidence="1">
    <location>
        <position position="253"/>
    </location>
    <ligand>
        <name>NADPH</name>
        <dbReference type="ChEBI" id="CHEBI:57783"/>
    </ligand>
</feature>
<evidence type="ECO:0000255" key="1">
    <source>
        <dbReference type="HAMAP-Rule" id="MF_00394"/>
    </source>
</evidence>